<reference key="1">
    <citation type="journal article" date="2003" name="Lipids">
        <title>Cloning of an alkaline lipase gene from Penicillium cyclopium and its expression in Escherichia coli.</title>
        <authorList>
            <person name="Wu M."/>
            <person name="Qian Z."/>
            <person name="Jiang P."/>
            <person name="Min T."/>
            <person name="Sun C."/>
            <person name="Huang W."/>
        </authorList>
    </citation>
    <scope>NUCLEOTIDE SEQUENCE [MRNA]</scope>
    <scope>FUNCTION</scope>
    <scope>CATALYTIC ACTIVITY</scope>
    <scope>BIOPHYSICOCHEMICAL PROPERTIES</scope>
</reference>
<organism>
    <name type="scientific">Penicillium cyclopium</name>
    <dbReference type="NCBI Taxonomy" id="60167"/>
    <lineage>
        <taxon>Eukaryota</taxon>
        <taxon>Fungi</taxon>
        <taxon>Dikarya</taxon>
        <taxon>Ascomycota</taxon>
        <taxon>Pezizomycotina</taxon>
        <taxon>Eurotiomycetes</taxon>
        <taxon>Eurotiomycetidae</taxon>
        <taxon>Eurotiales</taxon>
        <taxon>Aspergillaceae</taxon>
        <taxon>Penicillium</taxon>
    </lineage>
</organism>
<feature type="signal peptide" evidence="4">
    <location>
        <begin position="1"/>
        <end position="20"/>
    </location>
</feature>
<feature type="chain" id="PRO_5007717422" description="Secreted alkaline triacylglycerol lipase">
    <location>
        <begin position="21"/>
        <end position="285"/>
    </location>
</feature>
<feature type="active site" description="Nucleophile" evidence="2">
    <location>
        <position position="159"/>
    </location>
</feature>
<feature type="active site" description="Charge relay system" evidence="3">
    <location>
        <position position="215"/>
    </location>
</feature>
<feature type="active site" description="Charge relay system" evidence="1">
    <location>
        <position position="268"/>
    </location>
</feature>
<dbReference type="EC" id="3.1.1.3" evidence="5"/>
<dbReference type="EMBL" id="AF274320">
    <property type="protein sequence ID" value="AAF82375.1"/>
    <property type="molecule type" value="mRNA"/>
</dbReference>
<dbReference type="EMBL" id="GU235981">
    <property type="protein sequence ID" value="ADA70731.1"/>
    <property type="molecule type" value="Genomic_DNA"/>
</dbReference>
<dbReference type="SMR" id="Q9P451"/>
<dbReference type="ESTHER" id="penex-Q9HFW6">
    <property type="family name" value="Lipase_3"/>
</dbReference>
<dbReference type="GO" id="GO:0005576">
    <property type="term" value="C:extracellular region"/>
    <property type="evidence" value="ECO:0007669"/>
    <property type="project" value="UniProtKB-SubCell"/>
</dbReference>
<dbReference type="GO" id="GO:0004806">
    <property type="term" value="F:triacylglycerol lipase activity"/>
    <property type="evidence" value="ECO:0007669"/>
    <property type="project" value="UniProtKB-EC"/>
</dbReference>
<dbReference type="GO" id="GO:0017000">
    <property type="term" value="P:antibiotic biosynthetic process"/>
    <property type="evidence" value="ECO:0007669"/>
    <property type="project" value="UniProtKB-ARBA"/>
</dbReference>
<dbReference type="GO" id="GO:0016042">
    <property type="term" value="P:lipid catabolic process"/>
    <property type="evidence" value="ECO:0007669"/>
    <property type="project" value="UniProtKB-KW"/>
</dbReference>
<dbReference type="GO" id="GO:0072330">
    <property type="term" value="P:monocarboxylic acid biosynthetic process"/>
    <property type="evidence" value="ECO:0007669"/>
    <property type="project" value="UniProtKB-ARBA"/>
</dbReference>
<dbReference type="CDD" id="cd00519">
    <property type="entry name" value="Lipase_3"/>
    <property type="match status" value="1"/>
</dbReference>
<dbReference type="Gene3D" id="3.40.50.1820">
    <property type="entry name" value="alpha/beta hydrolase"/>
    <property type="match status" value="1"/>
</dbReference>
<dbReference type="InterPro" id="IPR029058">
    <property type="entry name" value="AB_hydrolase_fold"/>
</dbReference>
<dbReference type="InterPro" id="IPR051299">
    <property type="entry name" value="AB_hydrolase_lip/est"/>
</dbReference>
<dbReference type="InterPro" id="IPR002921">
    <property type="entry name" value="Fungal_lipase-type"/>
</dbReference>
<dbReference type="PANTHER" id="PTHR46640:SF1">
    <property type="entry name" value="FUNGAL LIPASE-LIKE DOMAIN-CONTAINING PROTEIN-RELATED"/>
    <property type="match status" value="1"/>
</dbReference>
<dbReference type="PANTHER" id="PTHR46640">
    <property type="entry name" value="TRIACYLGLYCEROL LIPASE, PUTATIVE (AFU_ORTHOLOGUE AFUA_6G06510)-RELATED"/>
    <property type="match status" value="1"/>
</dbReference>
<dbReference type="Pfam" id="PF01764">
    <property type="entry name" value="Lipase_3"/>
    <property type="match status" value="1"/>
</dbReference>
<dbReference type="SUPFAM" id="SSF53474">
    <property type="entry name" value="alpha/beta-Hydrolases"/>
    <property type="match status" value="1"/>
</dbReference>
<comment type="function">
    <text evidence="5">Secreted alkaline lipase that hydrolyzes acylglycerol lipids such as triacylglycerols and consequently releases free fatty acid (PubMed:12784858). Is able to hydrolyze tributyrin (1,2,3-tributyryl-glycerin) (PubMed:12784858).</text>
</comment>
<comment type="catalytic activity">
    <reaction evidence="5">
        <text>a triacylglycerol + H2O = a diacylglycerol + a fatty acid + H(+)</text>
        <dbReference type="Rhea" id="RHEA:12044"/>
        <dbReference type="ChEBI" id="CHEBI:15377"/>
        <dbReference type="ChEBI" id="CHEBI:15378"/>
        <dbReference type="ChEBI" id="CHEBI:17855"/>
        <dbReference type="ChEBI" id="CHEBI:18035"/>
        <dbReference type="ChEBI" id="CHEBI:28868"/>
        <dbReference type="EC" id="3.1.1.3"/>
    </reaction>
</comment>
<comment type="biophysicochemical properties">
    <phDependence>
        <text evidence="5">Optimum pH is 10.0.</text>
    </phDependence>
    <temperatureDependence>
        <text evidence="5">Optimum temperature is 30 degrees Celsius.</text>
    </temperatureDependence>
</comment>
<comment type="subcellular location">
    <subcellularLocation>
        <location evidence="8">Secreted</location>
    </subcellularLocation>
</comment>
<comment type="similarity">
    <text evidence="7">Belongs to the AB hydrolase superfamily. FaeA family.</text>
</comment>
<keyword id="KW-0378">Hydrolase</keyword>
<keyword id="KW-0442">Lipid degradation</keyword>
<keyword id="KW-0443">Lipid metabolism</keyword>
<keyword id="KW-0964">Secreted</keyword>
<keyword id="KW-0732">Signal</keyword>
<name>LIPA_PENCY</name>
<accession>Q9P451</accession>
<evidence type="ECO:0000250" key="1">
    <source>
        <dbReference type="UniProtKB" id="O42807"/>
    </source>
</evidence>
<evidence type="ECO:0000250" key="2">
    <source>
        <dbReference type="UniProtKB" id="P61869"/>
    </source>
</evidence>
<evidence type="ECO:0000250" key="3">
    <source>
        <dbReference type="UniProtKB" id="P61870"/>
    </source>
</evidence>
<evidence type="ECO:0000255" key="4"/>
<evidence type="ECO:0000269" key="5">
    <source>
    </source>
</evidence>
<evidence type="ECO:0000303" key="6">
    <source>
    </source>
</evidence>
<evidence type="ECO:0000305" key="7"/>
<evidence type="ECO:0000305" key="8">
    <source>
    </source>
</evidence>
<sequence>MLFNYQSLLVGVSLISQALSAPILESRATADAAAFPDLHRAAKLSSAAYTGCIGKAFDVTITKRIYDLVTDTNGFVGYSTEKKTIAVIMRGSTTITDFVNDIDIALITPELSGVTFPSDVKIMRGVHRPWSAVHDTIITEVKALIAKYPDYTLEAVGHSLGGALTSIAHVALAQNFPDKSLVSNALNAFPIGNQAWADFGTAQAGTFNRGNNVLDGVPNMYSSPLVNFKHYGTEYYSSGTEASTVKCEGQRDKSCSAGNGMYAVTPGHIASFGVVMLTAGCGYLS</sequence>
<protein>
    <recommendedName>
        <fullName evidence="6">Secreted alkaline triacylglycerol lipase</fullName>
        <ecNumber evidence="5">3.1.1.3</ecNumber>
    </recommendedName>
</protein>
<proteinExistence type="evidence at protein level"/>